<dbReference type="GO" id="GO:0005576">
    <property type="term" value="C:extracellular region"/>
    <property type="evidence" value="ECO:0007669"/>
    <property type="project" value="UniProtKB-SubCell"/>
</dbReference>
<dbReference type="GO" id="GO:0005179">
    <property type="term" value="F:hormone activity"/>
    <property type="evidence" value="ECO:0007669"/>
    <property type="project" value="UniProtKB-KW"/>
</dbReference>
<dbReference type="GO" id="GO:0007629">
    <property type="term" value="P:flight behavior"/>
    <property type="evidence" value="ECO:0007669"/>
    <property type="project" value="UniProtKB-KW"/>
</dbReference>
<dbReference type="GO" id="GO:0007218">
    <property type="term" value="P:neuropeptide signaling pathway"/>
    <property type="evidence" value="ECO:0007669"/>
    <property type="project" value="UniProtKB-KW"/>
</dbReference>
<dbReference type="InterPro" id="IPR002047">
    <property type="entry name" value="Adipokinetic_hormone_CS"/>
</dbReference>
<dbReference type="PROSITE" id="PS00256">
    <property type="entry name" value="AKH"/>
    <property type="match status" value="1"/>
</dbReference>
<sequence length="8" mass="948">QVNFTPGW</sequence>
<reference evidence="5" key="1">
    <citation type="journal article" date="2012" name="Syst. Biol.">
        <title>Peptidomics-based phylogeny and biogeography of Mantophasmatodea (Hexapoda).</title>
        <authorList>
            <person name="Predel R."/>
            <person name="Neupert S."/>
            <person name="Huetteroth W."/>
            <person name="Kahnt J."/>
            <person name="Waidelich D."/>
            <person name="Roth S."/>
        </authorList>
    </citation>
    <scope>PROTEIN SEQUENCE</scope>
    <scope>PYROGLUTAMATE FORMATION AT GLN-1</scope>
    <scope>AMIDATION AT TRP-8</scope>
    <source>
        <tissue evidence="3">Corpora cardiaca</tissue>
    </source>
</reference>
<protein>
    <recommendedName>
        <fullName evidence="4">Adipokinetic hormone</fullName>
        <shortName evidence="4">AKH</shortName>
    </recommendedName>
</protein>
<feature type="peptide" id="PRO_0000421654" description="Adipokinetic hormone" evidence="3">
    <location>
        <begin position="1"/>
        <end position="8"/>
    </location>
</feature>
<feature type="modified residue" description="Pyrrolidone carboxylic acid" evidence="3">
    <location>
        <position position="1"/>
    </location>
</feature>
<feature type="modified residue" description="Tryptophan amide" evidence="3">
    <location>
        <position position="8"/>
    </location>
</feature>
<evidence type="ECO:0000250" key="1">
    <source>
        <dbReference type="UniProtKB" id="P55319"/>
    </source>
</evidence>
<evidence type="ECO:0000255" key="2"/>
<evidence type="ECO:0000269" key="3">
    <source>
    </source>
</evidence>
<evidence type="ECO:0000303" key="4">
    <source>
    </source>
</evidence>
<evidence type="ECO:0000305" key="5"/>
<evidence type="ECO:0000305" key="6">
    <source>
    </source>
</evidence>
<organism>
    <name type="scientific">Karoophasma biedouwense</name>
    <name type="common">Gladiator</name>
    <name type="synonym">Heel-walker</name>
    <dbReference type="NCBI Taxonomy" id="253133"/>
    <lineage>
        <taxon>Eukaryota</taxon>
        <taxon>Metazoa</taxon>
        <taxon>Ecdysozoa</taxon>
        <taxon>Arthropoda</taxon>
        <taxon>Hexapoda</taxon>
        <taxon>Insecta</taxon>
        <taxon>Pterygota</taxon>
        <taxon>Neoptera</taxon>
        <taxon>Polyneoptera</taxon>
        <taxon>Mantophasmatodea</taxon>
        <taxon>Austrophasmatidae</taxon>
        <taxon>Karoophasma</taxon>
    </lineage>
</organism>
<name>AKH_KARBI</name>
<accession>B3A075</accession>
<proteinExistence type="evidence at protein level"/>
<keyword id="KW-0027">Amidation</keyword>
<keyword id="KW-0903">Direct protein sequencing</keyword>
<keyword id="KW-0286">Flight</keyword>
<keyword id="KW-0372">Hormone</keyword>
<keyword id="KW-0527">Neuropeptide</keyword>
<keyword id="KW-0873">Pyrrolidone carboxylic acid</keyword>
<keyword id="KW-0964">Secreted</keyword>
<comment type="function">
    <text evidence="1">This hormone, released from cells in the corpora cardiaca, causes release of diglycerides from the fat body and stimulation of muscles to use these diglycerides as an energy source during energy-demanding processes.</text>
</comment>
<comment type="subcellular location">
    <subcellularLocation>
        <location evidence="6">Secreted</location>
    </subcellularLocation>
</comment>
<comment type="similarity">
    <text evidence="2">Belongs to the AKH/HRTH/RPCH family.</text>
</comment>